<organism>
    <name type="scientific">Mycobacterium avium (strain 104)</name>
    <dbReference type="NCBI Taxonomy" id="243243"/>
    <lineage>
        <taxon>Bacteria</taxon>
        <taxon>Bacillati</taxon>
        <taxon>Actinomycetota</taxon>
        <taxon>Actinomycetes</taxon>
        <taxon>Mycobacteriales</taxon>
        <taxon>Mycobacteriaceae</taxon>
        <taxon>Mycobacterium</taxon>
        <taxon>Mycobacterium avium complex (MAC)</taxon>
    </lineage>
</organism>
<comment type="catalytic activity">
    <reaction evidence="1">
        <text>1-(5-phospho-beta-D-ribosyl)-ATP + H2O = 1-(5-phospho-beta-D-ribosyl)-5'-AMP + diphosphate + H(+)</text>
        <dbReference type="Rhea" id="RHEA:22828"/>
        <dbReference type="ChEBI" id="CHEBI:15377"/>
        <dbReference type="ChEBI" id="CHEBI:15378"/>
        <dbReference type="ChEBI" id="CHEBI:33019"/>
        <dbReference type="ChEBI" id="CHEBI:59457"/>
        <dbReference type="ChEBI" id="CHEBI:73183"/>
        <dbReference type="EC" id="3.6.1.31"/>
    </reaction>
</comment>
<comment type="pathway">
    <text evidence="1">Amino-acid biosynthesis; L-histidine biosynthesis; L-histidine from 5-phospho-alpha-D-ribose 1-diphosphate: step 2/9.</text>
</comment>
<comment type="subcellular location">
    <subcellularLocation>
        <location evidence="1">Cytoplasm</location>
    </subcellularLocation>
</comment>
<comment type="similarity">
    <text evidence="1">Belongs to the PRA-PH family.</text>
</comment>
<sequence length="93" mass="10100">MKQSLAVKTFEDLFAELGERARTRPAGSATVAALDGGVHGLGKKILEEAGEVWLAAEHESDDALAGEISQLLYWTQVLMIARGLSLDDVYRKL</sequence>
<evidence type="ECO:0000255" key="1">
    <source>
        <dbReference type="HAMAP-Rule" id="MF_01020"/>
    </source>
</evidence>
<reference key="1">
    <citation type="submission" date="2006-10" db="EMBL/GenBank/DDBJ databases">
        <authorList>
            <person name="Fleischmann R.D."/>
            <person name="Dodson R.J."/>
            <person name="Haft D.H."/>
            <person name="Merkel J.S."/>
            <person name="Nelson W.C."/>
            <person name="Fraser C.M."/>
        </authorList>
    </citation>
    <scope>NUCLEOTIDE SEQUENCE [LARGE SCALE GENOMIC DNA]</scope>
    <source>
        <strain>104</strain>
    </source>
</reference>
<name>HIS2_MYCA1</name>
<dbReference type="EC" id="3.6.1.31" evidence="1"/>
<dbReference type="EMBL" id="CP000479">
    <property type="protein sequence ID" value="ABK65931.1"/>
    <property type="molecule type" value="Genomic_DNA"/>
</dbReference>
<dbReference type="RefSeq" id="WP_003872174.1">
    <property type="nucleotide sequence ID" value="NC_008595.1"/>
</dbReference>
<dbReference type="SMR" id="A0QFA4"/>
<dbReference type="KEGG" id="mav:MAV_2392"/>
<dbReference type="HOGENOM" id="CLU_123337_2_1_11"/>
<dbReference type="UniPathway" id="UPA00031">
    <property type="reaction ID" value="UER00007"/>
</dbReference>
<dbReference type="Proteomes" id="UP000001574">
    <property type="component" value="Chromosome"/>
</dbReference>
<dbReference type="GO" id="GO:0005737">
    <property type="term" value="C:cytoplasm"/>
    <property type="evidence" value="ECO:0007669"/>
    <property type="project" value="UniProtKB-SubCell"/>
</dbReference>
<dbReference type="GO" id="GO:0005524">
    <property type="term" value="F:ATP binding"/>
    <property type="evidence" value="ECO:0007669"/>
    <property type="project" value="UniProtKB-KW"/>
</dbReference>
<dbReference type="GO" id="GO:0004636">
    <property type="term" value="F:phosphoribosyl-ATP diphosphatase activity"/>
    <property type="evidence" value="ECO:0007669"/>
    <property type="project" value="UniProtKB-UniRule"/>
</dbReference>
<dbReference type="GO" id="GO:0000105">
    <property type="term" value="P:L-histidine biosynthetic process"/>
    <property type="evidence" value="ECO:0007669"/>
    <property type="project" value="UniProtKB-UniRule"/>
</dbReference>
<dbReference type="CDD" id="cd11547">
    <property type="entry name" value="NTP-PPase_HisE"/>
    <property type="match status" value="1"/>
</dbReference>
<dbReference type="FunFam" id="1.10.287.1080:FF:000005">
    <property type="entry name" value="Phosphoribosyl-ATP pyrophosphatase"/>
    <property type="match status" value="1"/>
</dbReference>
<dbReference type="Gene3D" id="1.10.287.1080">
    <property type="entry name" value="MazG-like"/>
    <property type="match status" value="1"/>
</dbReference>
<dbReference type="HAMAP" id="MF_01020">
    <property type="entry name" value="HisE"/>
    <property type="match status" value="1"/>
</dbReference>
<dbReference type="InterPro" id="IPR008179">
    <property type="entry name" value="HisE"/>
</dbReference>
<dbReference type="InterPro" id="IPR021130">
    <property type="entry name" value="PRib-ATP_PPHydrolase-like"/>
</dbReference>
<dbReference type="NCBIfam" id="TIGR03188">
    <property type="entry name" value="histidine_hisI"/>
    <property type="match status" value="1"/>
</dbReference>
<dbReference type="NCBIfam" id="NF001610">
    <property type="entry name" value="PRK00400.1-1"/>
    <property type="match status" value="1"/>
</dbReference>
<dbReference type="PANTHER" id="PTHR42945">
    <property type="entry name" value="HISTIDINE BIOSYNTHESIS BIFUNCTIONAL PROTEIN"/>
    <property type="match status" value="1"/>
</dbReference>
<dbReference type="PANTHER" id="PTHR42945:SF1">
    <property type="entry name" value="HISTIDINE BIOSYNTHESIS BIFUNCTIONAL PROTEIN HIS7"/>
    <property type="match status" value="1"/>
</dbReference>
<dbReference type="Pfam" id="PF01503">
    <property type="entry name" value="PRA-PH"/>
    <property type="match status" value="1"/>
</dbReference>
<dbReference type="SUPFAM" id="SSF101386">
    <property type="entry name" value="all-alpha NTP pyrophosphatases"/>
    <property type="match status" value="1"/>
</dbReference>
<keyword id="KW-0028">Amino-acid biosynthesis</keyword>
<keyword id="KW-0067">ATP-binding</keyword>
<keyword id="KW-0963">Cytoplasm</keyword>
<keyword id="KW-0368">Histidine biosynthesis</keyword>
<keyword id="KW-0378">Hydrolase</keyword>
<keyword id="KW-0547">Nucleotide-binding</keyword>
<proteinExistence type="inferred from homology"/>
<protein>
    <recommendedName>
        <fullName evidence="1">Phosphoribosyl-ATP pyrophosphatase</fullName>
        <shortName evidence="1">PRA-PH</shortName>
        <ecNumber evidence="1">3.6.1.31</ecNumber>
    </recommendedName>
</protein>
<accession>A0QFA4</accession>
<gene>
    <name evidence="1" type="primary">hisE</name>
    <name type="ordered locus">MAV_2392</name>
</gene>
<feature type="chain" id="PRO_1000063354" description="Phosphoribosyl-ATP pyrophosphatase">
    <location>
        <begin position="1"/>
        <end position="93"/>
    </location>
</feature>